<dbReference type="EMBL" id="BC091281">
    <property type="protein sequence ID" value="AAH91281.1"/>
    <property type="molecule type" value="mRNA"/>
</dbReference>
<dbReference type="RefSeq" id="NP_001017446.1">
    <property type="nucleotide sequence ID" value="NM_001017446.2"/>
</dbReference>
<dbReference type="SMR" id="Q5BJY3"/>
<dbReference type="FunCoup" id="Q5BJY3">
    <property type="interactions" value="473"/>
</dbReference>
<dbReference type="STRING" id="10116.ENSRNOP00000022169"/>
<dbReference type="PhosphoSitePlus" id="Q5BJY3"/>
<dbReference type="PaxDb" id="10116-ENSRNOP00000022169"/>
<dbReference type="Ensembl" id="ENSRNOT00000022169.7">
    <property type="protein sequence ID" value="ENSRNOP00000022169.5"/>
    <property type="gene ID" value="ENSRNOG00000016532.7"/>
</dbReference>
<dbReference type="GeneID" id="291737"/>
<dbReference type="KEGG" id="rno:291737"/>
<dbReference type="UCSC" id="RGD:1310199">
    <property type="organism name" value="rat"/>
</dbReference>
<dbReference type="AGR" id="RGD:1310199"/>
<dbReference type="CTD" id="125476"/>
<dbReference type="RGD" id="1310199">
    <property type="gene designation" value="Ino80c"/>
</dbReference>
<dbReference type="eggNOG" id="KOG4137">
    <property type="taxonomic scope" value="Eukaryota"/>
</dbReference>
<dbReference type="GeneTree" id="ENSGT00390000014303"/>
<dbReference type="HOGENOM" id="CLU_071116_0_0_1"/>
<dbReference type="InParanoid" id="Q5BJY3"/>
<dbReference type="OMA" id="ATTQAQM"/>
<dbReference type="OrthoDB" id="63970at9989"/>
<dbReference type="PhylomeDB" id="Q5BJY3"/>
<dbReference type="TreeFam" id="TF323529"/>
<dbReference type="Reactome" id="R-RNO-5689603">
    <property type="pathway name" value="UCH proteinases"/>
</dbReference>
<dbReference type="Reactome" id="R-RNO-5696394">
    <property type="pathway name" value="DNA Damage Recognition in GG-NER"/>
</dbReference>
<dbReference type="ChiTaRS" id="Ino80c">
    <property type="organism name" value="rat"/>
</dbReference>
<dbReference type="PRO" id="PR:Q5BJY3"/>
<dbReference type="Proteomes" id="UP000002494">
    <property type="component" value="Chromosome 18"/>
</dbReference>
<dbReference type="Bgee" id="ENSRNOG00000016532">
    <property type="expression patterns" value="Expressed in quadriceps femoris and 20 other cell types or tissues"/>
</dbReference>
<dbReference type="GO" id="GO:0005829">
    <property type="term" value="C:cytosol"/>
    <property type="evidence" value="ECO:0007669"/>
    <property type="project" value="Ensembl"/>
</dbReference>
<dbReference type="GO" id="GO:0001650">
    <property type="term" value="C:fibrillar center"/>
    <property type="evidence" value="ECO:0007669"/>
    <property type="project" value="Ensembl"/>
</dbReference>
<dbReference type="GO" id="GO:0031011">
    <property type="term" value="C:Ino80 complex"/>
    <property type="evidence" value="ECO:0000266"/>
    <property type="project" value="RGD"/>
</dbReference>
<dbReference type="GO" id="GO:0071339">
    <property type="term" value="C:MLL1 complex"/>
    <property type="evidence" value="ECO:0000250"/>
    <property type="project" value="UniProtKB"/>
</dbReference>
<dbReference type="GO" id="GO:0006338">
    <property type="term" value="P:chromatin remodeling"/>
    <property type="evidence" value="ECO:0000266"/>
    <property type="project" value="RGD"/>
</dbReference>
<dbReference type="GO" id="GO:0006310">
    <property type="term" value="P:DNA recombination"/>
    <property type="evidence" value="ECO:0007669"/>
    <property type="project" value="UniProtKB-KW"/>
</dbReference>
<dbReference type="GO" id="GO:0006281">
    <property type="term" value="P:DNA repair"/>
    <property type="evidence" value="ECO:0007669"/>
    <property type="project" value="UniProtKB-KW"/>
</dbReference>
<dbReference type="GO" id="GO:0045739">
    <property type="term" value="P:positive regulation of DNA repair"/>
    <property type="evidence" value="ECO:0000266"/>
    <property type="project" value="RGD"/>
</dbReference>
<dbReference type="GO" id="GO:0045893">
    <property type="term" value="P:positive regulation of DNA-templated transcription"/>
    <property type="evidence" value="ECO:0000266"/>
    <property type="project" value="RGD"/>
</dbReference>
<dbReference type="GO" id="GO:1904507">
    <property type="term" value="P:positive regulation of telomere maintenance in response to DNA damage"/>
    <property type="evidence" value="ECO:0000266"/>
    <property type="project" value="RGD"/>
</dbReference>
<dbReference type="GO" id="GO:0051726">
    <property type="term" value="P:regulation of cell cycle"/>
    <property type="evidence" value="ECO:0000266"/>
    <property type="project" value="RGD"/>
</dbReference>
<dbReference type="GO" id="GO:0033044">
    <property type="term" value="P:regulation of chromosome organization"/>
    <property type="evidence" value="ECO:0000266"/>
    <property type="project" value="RGD"/>
</dbReference>
<dbReference type="GO" id="GO:0006282">
    <property type="term" value="P:regulation of DNA repair"/>
    <property type="evidence" value="ECO:0000266"/>
    <property type="project" value="RGD"/>
</dbReference>
<dbReference type="GO" id="GO:0006275">
    <property type="term" value="P:regulation of DNA replication"/>
    <property type="evidence" value="ECO:0000266"/>
    <property type="project" value="RGD"/>
</dbReference>
<dbReference type="GO" id="GO:0060382">
    <property type="term" value="P:regulation of DNA strand elongation"/>
    <property type="evidence" value="ECO:0000266"/>
    <property type="project" value="RGD"/>
</dbReference>
<dbReference type="GO" id="GO:0045995">
    <property type="term" value="P:regulation of embryonic development"/>
    <property type="evidence" value="ECO:0000266"/>
    <property type="project" value="RGD"/>
</dbReference>
<dbReference type="GO" id="GO:0000723">
    <property type="term" value="P:telomere maintenance"/>
    <property type="evidence" value="ECO:0000266"/>
    <property type="project" value="RGD"/>
</dbReference>
<dbReference type="InterPro" id="IPR029525">
    <property type="entry name" value="INO80C/Ies6"/>
</dbReference>
<dbReference type="InterPro" id="IPR013272">
    <property type="entry name" value="Vps72/YL1_C"/>
</dbReference>
<dbReference type="PANTHER" id="PTHR31200">
    <property type="entry name" value="INO80 COMPLEX SUBUNIT C"/>
    <property type="match status" value="1"/>
</dbReference>
<dbReference type="PANTHER" id="PTHR31200:SF1">
    <property type="entry name" value="INO80 COMPLEX SUBUNIT C"/>
    <property type="match status" value="1"/>
</dbReference>
<dbReference type="Pfam" id="PF08265">
    <property type="entry name" value="YL1_C"/>
    <property type="match status" value="1"/>
</dbReference>
<dbReference type="SMART" id="SM00993">
    <property type="entry name" value="YL1_C"/>
    <property type="match status" value="1"/>
</dbReference>
<sequence length="191" mass="20424">MAAQIPIVAATSTPTVARNSKKRPASPSHNSSGGGYGASKKKKLSASGFAQGVSIEAMSESKMASSELSSGPVEKAAKPLPFKDPNFVHSGHGGAVAGKKNRTWKNLKQILAAERALPWQLNDPNYFSIDAPPSFKPAKKYSDVSGLLANYTDPQSKLRFSTVEEFSYIRRLPSDVVTGYLTLRKATSIVP</sequence>
<organism>
    <name type="scientific">Rattus norvegicus</name>
    <name type="common">Rat</name>
    <dbReference type="NCBI Taxonomy" id="10116"/>
    <lineage>
        <taxon>Eukaryota</taxon>
        <taxon>Metazoa</taxon>
        <taxon>Chordata</taxon>
        <taxon>Craniata</taxon>
        <taxon>Vertebrata</taxon>
        <taxon>Euteleostomi</taxon>
        <taxon>Mammalia</taxon>
        <taxon>Eutheria</taxon>
        <taxon>Euarchontoglires</taxon>
        <taxon>Glires</taxon>
        <taxon>Rodentia</taxon>
        <taxon>Myomorpha</taxon>
        <taxon>Muroidea</taxon>
        <taxon>Muridae</taxon>
        <taxon>Murinae</taxon>
        <taxon>Rattus</taxon>
    </lineage>
</organism>
<evidence type="ECO:0000250" key="1"/>
<evidence type="ECO:0000256" key="2">
    <source>
        <dbReference type="SAM" id="MobiDB-lite"/>
    </source>
</evidence>
<protein>
    <recommendedName>
        <fullName>INO80 complex subunit C</fullName>
    </recommendedName>
</protein>
<reference key="1">
    <citation type="journal article" date="2004" name="Genome Res.">
        <title>The status, quality, and expansion of the NIH full-length cDNA project: the Mammalian Gene Collection (MGC).</title>
        <authorList>
            <consortium name="The MGC Project Team"/>
        </authorList>
    </citation>
    <scope>NUCLEOTIDE SEQUENCE [LARGE SCALE MRNA]</scope>
    <source>
        <tissue>Heart</tissue>
    </source>
</reference>
<proteinExistence type="evidence at transcript level"/>
<feature type="chain" id="PRO_0000079319" description="INO80 complex subunit C">
    <location>
        <begin position="1"/>
        <end position="191"/>
    </location>
</feature>
<feature type="region of interest" description="Disordered" evidence="2">
    <location>
        <begin position="1"/>
        <end position="41"/>
    </location>
</feature>
<gene>
    <name type="primary">Ino80c</name>
</gene>
<accession>Q5BJY3</accession>
<name>IN80C_RAT</name>
<comment type="function">
    <text>Proposed core component of the chromatin remodeling INO80 complex which is involved in transcriptional regulation, DNA replication and probably DNA repair.</text>
</comment>
<comment type="subunit">
    <text evidence="1">Component of the chromatin remodeling INO80 complex; specifically part of a complex module associated with the helicase ATP-binding and the helicase C-terminal domain of INO80. Component of some MLL1/MLL complex, at least composed of the core components KMT2A/MLL1, ASH2L, HCFC1/HCF1, WDR5 and RBBP5, as well as the facultative components BACC1, CHD8, E2F6, HSP70, INO80C, KANSL1, LAS1L, MAX, MCRS1, MGA, MYST1/MOF, PELP1, PHF20, PRP31, RING2, RUVB1/TIP49A, RUVB2/TIP49B, SENP3, TAF1, TAF4, TAF6, TAF7, TAF9 and TEX10 (By similarity).</text>
</comment>
<comment type="subcellular location">
    <subcellularLocation>
        <location evidence="1">Nucleus</location>
    </subcellularLocation>
</comment>
<keyword id="KW-0227">DNA damage</keyword>
<keyword id="KW-0233">DNA recombination</keyword>
<keyword id="KW-0234">DNA repair</keyword>
<keyword id="KW-0539">Nucleus</keyword>
<keyword id="KW-1185">Reference proteome</keyword>
<keyword id="KW-0804">Transcription</keyword>
<keyword id="KW-0805">Transcription regulation</keyword>